<sequence>MNQVARGAGAKRYADAKAALAGVVADGQTLAVGGFGLCGIPEALITALRDSAVSGLTVISNNAGVDGFGLGQLLATRQIRKMISSYVGENKEFERQYLAGELELEFNPQGTLAERLRAGGAGIPAFYTATGYGTIVADGKETREFDGKHYVLETALQADVALIKAWRADTAGNLVFRKTARNFNPACAMAGRICIAEVEEIVELGAIDPDQVHLPGIYVDRLVLNATPEKRIEQRTVRQGDK</sequence>
<protein>
    <recommendedName>
        <fullName>Succinyl-CoA:3-ketoacid coenzyme A transferase subunit A</fullName>
        <ecNumber>2.8.3.5</ecNumber>
    </recommendedName>
    <alternativeName>
        <fullName>Succinyl-CoA:3-oxoacid CoA-transferase</fullName>
        <shortName>OXCT A</shortName>
    </alternativeName>
</protein>
<comment type="catalytic activity">
    <reaction>
        <text>a 3-oxo acid + succinyl-CoA = a 3-oxoacyl-CoA + succinate</text>
        <dbReference type="Rhea" id="RHEA:24564"/>
        <dbReference type="ChEBI" id="CHEBI:30031"/>
        <dbReference type="ChEBI" id="CHEBI:35973"/>
        <dbReference type="ChEBI" id="CHEBI:57292"/>
        <dbReference type="ChEBI" id="CHEBI:90726"/>
        <dbReference type="EC" id="2.8.3.5"/>
    </reaction>
</comment>
<comment type="pathway">
    <text>Bacterial outer membrane biogenesis; lipopolysaccharide biosynthesis.</text>
</comment>
<comment type="subunit">
    <text evidence="1">Heterodimer of a subunit A and a subunit B.</text>
</comment>
<comment type="similarity">
    <text evidence="3">Belongs to the 3-oxoacid CoA-transferase subunit A family.</text>
</comment>
<name>SCOA_XANCB</name>
<dbReference type="EC" id="2.8.3.5"/>
<dbReference type="EMBL" id="AF204145">
    <property type="protein sequence ID" value="AAK53462.1"/>
    <property type="molecule type" value="Genomic_DNA"/>
</dbReference>
<dbReference type="EMBL" id="AM920689">
    <property type="protein sequence ID" value="CAP53095.1"/>
    <property type="molecule type" value="Genomic_DNA"/>
</dbReference>
<dbReference type="SMR" id="B0RVK4"/>
<dbReference type="KEGG" id="xca:xcc-b100_3728"/>
<dbReference type="HOGENOM" id="CLU_019942_2_0_6"/>
<dbReference type="UniPathway" id="UPA00030"/>
<dbReference type="Proteomes" id="UP000001188">
    <property type="component" value="Chromosome"/>
</dbReference>
<dbReference type="GO" id="GO:0008260">
    <property type="term" value="F:succinyl-CoA:3-oxo-acid CoA-transferase activity"/>
    <property type="evidence" value="ECO:0007669"/>
    <property type="project" value="UniProtKB-EC"/>
</dbReference>
<dbReference type="GO" id="GO:0009103">
    <property type="term" value="P:lipopolysaccharide biosynthetic process"/>
    <property type="evidence" value="ECO:0007669"/>
    <property type="project" value="UniProtKB-UniPathway"/>
</dbReference>
<dbReference type="Gene3D" id="3.40.1080.10">
    <property type="entry name" value="Glutaconate Coenzyme A-transferase"/>
    <property type="match status" value="1"/>
</dbReference>
<dbReference type="InterPro" id="IPR012792">
    <property type="entry name" value="3-oxoacid_CoA-transf_A"/>
</dbReference>
<dbReference type="InterPro" id="IPR004165">
    <property type="entry name" value="CoA_trans_fam_I"/>
</dbReference>
<dbReference type="InterPro" id="IPR004163">
    <property type="entry name" value="CoA_transf_BS"/>
</dbReference>
<dbReference type="InterPro" id="IPR037171">
    <property type="entry name" value="NagB/RpiA_transferase-like"/>
</dbReference>
<dbReference type="NCBIfam" id="TIGR02429">
    <property type="entry name" value="pcaI_scoA_fam"/>
    <property type="match status" value="1"/>
</dbReference>
<dbReference type="PANTHER" id="PTHR13707:SF60">
    <property type="entry name" value="ACETATE COA-TRANSFERASE SUBUNIT ALPHA"/>
    <property type="match status" value="1"/>
</dbReference>
<dbReference type="PANTHER" id="PTHR13707">
    <property type="entry name" value="KETOACID-COENZYME A TRANSFERASE"/>
    <property type="match status" value="1"/>
</dbReference>
<dbReference type="Pfam" id="PF01144">
    <property type="entry name" value="CoA_trans"/>
    <property type="match status" value="1"/>
</dbReference>
<dbReference type="SMART" id="SM00882">
    <property type="entry name" value="CoA_trans"/>
    <property type="match status" value="1"/>
</dbReference>
<dbReference type="SUPFAM" id="SSF100950">
    <property type="entry name" value="NagB/RpiA/CoA transferase-like"/>
    <property type="match status" value="1"/>
</dbReference>
<dbReference type="PROSITE" id="PS01273">
    <property type="entry name" value="COA_TRANSF_1"/>
    <property type="match status" value="1"/>
</dbReference>
<proteinExistence type="inferred from homology"/>
<evidence type="ECO:0000250" key="1"/>
<evidence type="ECO:0000255" key="2"/>
<evidence type="ECO:0000305" key="3"/>
<keyword id="KW-0448">Lipopolysaccharide biosynthesis</keyword>
<keyword id="KW-0808">Transferase</keyword>
<organism>
    <name type="scientific">Xanthomonas campestris pv. campestris (strain B100)</name>
    <dbReference type="NCBI Taxonomy" id="509169"/>
    <lineage>
        <taxon>Bacteria</taxon>
        <taxon>Pseudomonadati</taxon>
        <taxon>Pseudomonadota</taxon>
        <taxon>Gammaproteobacteria</taxon>
        <taxon>Lysobacterales</taxon>
        <taxon>Lysobacteraceae</taxon>
        <taxon>Xanthomonas</taxon>
    </lineage>
</organism>
<accession>B0RVK4</accession>
<accession>O34264</accession>
<reference key="1">
    <citation type="journal article" date="1997" name="Arch. Microbiol.">
        <title>Xanthomonas campestris pv. campestris lpsI and lpsJ genes encoding putative proteins with sequence similarity to the alpha- and beta-subunits of 3-oxoacid CoA-transferases are involved in LPS biosynthesis.</title>
        <authorList>
            <person name="Steinmann D."/>
            <person name="Koeplin R."/>
            <person name="Puehler A."/>
            <person name="Niehaus K."/>
        </authorList>
    </citation>
    <scope>NUCLEOTIDE SEQUENCE [GENOMIC DNA]</scope>
    <scope>FUNCTION</scope>
</reference>
<reference key="2">
    <citation type="journal article" date="2001" name="Mol. Genet. Genomics">
        <title>Lipopolysaccharide biosynthesis in Xanthomonas campestris pv. campestris: a cluster of 15 genes is involved in the biosynthesis of the LPS O-antigen and the LPS core.</title>
        <authorList>
            <person name="Vorhoelter F.-J."/>
            <person name="Niehaus K."/>
            <person name="Puehler A."/>
        </authorList>
    </citation>
    <scope>NUCLEOTIDE SEQUENCE [GENOMIC DNA]</scope>
</reference>
<reference key="3">
    <citation type="journal article" date="2008" name="J. Biotechnol.">
        <title>The genome of Xanthomonas campestris pv. campestris B100 and its use for the reconstruction of metabolic pathways involved in xanthan biosynthesis.</title>
        <authorList>
            <person name="Vorhoelter F.-J."/>
            <person name="Schneiker S."/>
            <person name="Goesmann A."/>
            <person name="Krause L."/>
            <person name="Bekel T."/>
            <person name="Kaiser O."/>
            <person name="Linke B."/>
            <person name="Patschkowski T."/>
            <person name="Rueckert C."/>
            <person name="Schmid J."/>
            <person name="Sidhu V.K."/>
            <person name="Sieber V."/>
            <person name="Tauch A."/>
            <person name="Watt S.A."/>
            <person name="Weisshaar B."/>
            <person name="Becker A."/>
            <person name="Niehaus K."/>
            <person name="Puehler A."/>
        </authorList>
    </citation>
    <scope>NUCLEOTIDE SEQUENCE [LARGE SCALE GENOMIC DNA]</scope>
    <source>
        <strain>B100</strain>
    </source>
</reference>
<gene>
    <name type="primary">lpsI</name>
    <name type="synonym">wxcI</name>
    <name type="ordered locus">xcc-b100_3728</name>
</gene>
<feature type="chain" id="PRO_0000333181" description="Succinyl-CoA:3-ketoacid coenzyme A transferase subunit A">
    <location>
        <begin position="1"/>
        <end position="242"/>
    </location>
</feature>
<feature type="binding site" evidence="2">
    <location>
        <begin position="33"/>
        <end position="39"/>
    </location>
    <ligand>
        <name>CoA</name>
        <dbReference type="ChEBI" id="CHEBI:57287"/>
    </ligand>
</feature>
<feature type="sequence conflict" description="In Ref. 1; no nucleotide entry and 2; AAK53462." evidence="3" ref="1 2">
    <original>ELELEFNPQ</original>
    <variation>RTRAGIQSA</variation>
    <location>
        <begin position="101"/>
        <end position="109"/>
    </location>
</feature>